<dbReference type="EMBL" id="AJ438613">
    <property type="protein sequence ID" value="CAD27460.1"/>
    <property type="molecule type" value="mRNA"/>
</dbReference>
<dbReference type="RefSeq" id="NP_001312631.1">
    <property type="nucleotide sequence ID" value="NM_001325702.2"/>
</dbReference>
<dbReference type="SMR" id="Q70Z19"/>
<dbReference type="STRING" id="4097.Q70Z19"/>
<dbReference type="PaxDb" id="4097-Q70Z19"/>
<dbReference type="GeneID" id="107801712"/>
<dbReference type="KEGG" id="nta:107801712"/>
<dbReference type="OMA" id="TEIMGCT"/>
<dbReference type="OrthoDB" id="27325at2759"/>
<dbReference type="PhylomeDB" id="Q70Z19"/>
<dbReference type="Proteomes" id="UP000084051">
    <property type="component" value="Unplaced"/>
</dbReference>
<dbReference type="GO" id="GO:0000785">
    <property type="term" value="C:chromatin"/>
    <property type="evidence" value="ECO:0000318"/>
    <property type="project" value="GO_Central"/>
</dbReference>
<dbReference type="GO" id="GO:0005737">
    <property type="term" value="C:cytoplasm"/>
    <property type="evidence" value="ECO:0007669"/>
    <property type="project" value="UniProtKB-SubCell"/>
</dbReference>
<dbReference type="GO" id="GO:0005634">
    <property type="term" value="C:nucleus"/>
    <property type="evidence" value="ECO:0000318"/>
    <property type="project" value="GO_Central"/>
</dbReference>
<dbReference type="GO" id="GO:0003682">
    <property type="term" value="F:chromatin binding"/>
    <property type="evidence" value="ECO:0000318"/>
    <property type="project" value="GO_Central"/>
</dbReference>
<dbReference type="GO" id="GO:0042393">
    <property type="term" value="F:histone binding"/>
    <property type="evidence" value="ECO:0000318"/>
    <property type="project" value="GO_Central"/>
</dbReference>
<dbReference type="GO" id="GO:0000724">
    <property type="term" value="P:double-strand break repair via homologous recombination"/>
    <property type="evidence" value="ECO:0007669"/>
    <property type="project" value="UniProtKB-ARBA"/>
</dbReference>
<dbReference type="GO" id="GO:0006334">
    <property type="term" value="P:nucleosome assembly"/>
    <property type="evidence" value="ECO:0000318"/>
    <property type="project" value="GO_Central"/>
</dbReference>
<dbReference type="FunFam" id="1.20.5.1500:FF:000001">
    <property type="entry name" value="Nucleosome assembly protein 1-like 1"/>
    <property type="match status" value="1"/>
</dbReference>
<dbReference type="FunFam" id="3.30.1120.90:FF:000005">
    <property type="entry name" value="Nucleosome assembly protein11"/>
    <property type="match status" value="1"/>
</dbReference>
<dbReference type="Gene3D" id="1.20.5.1500">
    <property type="match status" value="1"/>
</dbReference>
<dbReference type="Gene3D" id="3.30.1120.90">
    <property type="entry name" value="Nucleosome assembly protein"/>
    <property type="match status" value="1"/>
</dbReference>
<dbReference type="InterPro" id="IPR037231">
    <property type="entry name" value="NAP-like_sf"/>
</dbReference>
<dbReference type="InterPro" id="IPR002164">
    <property type="entry name" value="NAP_family"/>
</dbReference>
<dbReference type="PANTHER" id="PTHR11875">
    <property type="entry name" value="TESTIS-SPECIFIC Y-ENCODED PROTEIN"/>
    <property type="match status" value="1"/>
</dbReference>
<dbReference type="Pfam" id="PF00956">
    <property type="entry name" value="NAP"/>
    <property type="match status" value="1"/>
</dbReference>
<dbReference type="SUPFAM" id="SSF143113">
    <property type="entry name" value="NAP-like"/>
    <property type="match status" value="1"/>
</dbReference>
<name>NAP1A_TOBAC</name>
<proteinExistence type="evidence at protein level"/>
<protein>
    <recommendedName>
        <fullName>Nucleosome assembly protein 1;1</fullName>
        <shortName>NtNAP1;1</shortName>
    </recommendedName>
    <alternativeName>
        <fullName>Nucleosome assembly protein 1-like 1</fullName>
        <shortName>NtNAP1_L1</shortName>
    </alternativeName>
</protein>
<feature type="chain" id="PRO_0000423695" description="Nucleosome assembly protein 1;1">
    <location>
        <begin position="1"/>
        <end position="371"/>
    </location>
</feature>
<feature type="propeptide" id="PRO_0000423696" description="Removed in mature form" evidence="2">
    <location>
        <begin position="372"/>
        <end position="374"/>
    </location>
</feature>
<feature type="region of interest" description="Disordered" evidence="4">
    <location>
        <begin position="299"/>
        <end position="374"/>
    </location>
</feature>
<feature type="coiled-coil region" evidence="3">
    <location>
        <begin position="26"/>
        <end position="80"/>
    </location>
</feature>
<feature type="short sequence motif" description="Nuclear export signal" evidence="3">
    <location>
        <begin position="47"/>
        <end position="62"/>
    </location>
</feature>
<feature type="short sequence motif" description="Nuclear localization signal" evidence="3">
    <location>
        <begin position="223"/>
        <end position="228"/>
    </location>
</feature>
<feature type="compositionally biased region" description="Acidic residues" evidence="4">
    <location>
        <begin position="299"/>
        <end position="339"/>
    </location>
</feature>
<feature type="compositionally biased region" description="Basic residues" evidence="4">
    <location>
        <begin position="343"/>
        <end position="355"/>
    </location>
</feature>
<feature type="modified residue" description="Cysteine methyl ester" evidence="2">
    <location>
        <position position="371"/>
    </location>
</feature>
<feature type="lipid moiety-binding region" description="S-farnesyl cysteine" evidence="2">
    <location>
        <position position="371"/>
    </location>
</feature>
<sequence>MSNTKDNFNVADLTAALGAGDREDLVNALKNKLQDITGKPTNVLECLSPNVRKRVEVLKEIQSQHDELEAKFYEERAVLEAKYQKLYQPLYTKRFDIVNGVVEVNTSETEAAAMDQDEDEDAVGKGVPDFWLIAMKNNDVLSEEITERDEGALKFLKDIKWAKIDNPKGFKLEFFFDTNPYFTNTVLTKTYHMIDEDEPILEKALGTEIEWYPGKCLTQKILKKKPKKGSKNAKPITKTEQCESFFNFFSPPQVPEDEEDIDEDAAEELQSLMEQDYDIGSTIRDKIISHAVSWFTGEAAEDDFADLEDDDDDDEEDDDDEDEEEEDDEDDEDEEDEDDTNTKKKSSAVRKRGVRAHAPAGGQAGERPPECKQQ</sequence>
<organism>
    <name type="scientific">Nicotiana tabacum</name>
    <name type="common">Common tobacco</name>
    <dbReference type="NCBI Taxonomy" id="4097"/>
    <lineage>
        <taxon>Eukaryota</taxon>
        <taxon>Viridiplantae</taxon>
        <taxon>Streptophyta</taxon>
        <taxon>Embryophyta</taxon>
        <taxon>Tracheophyta</taxon>
        <taxon>Spermatophyta</taxon>
        <taxon>Magnoliopsida</taxon>
        <taxon>eudicotyledons</taxon>
        <taxon>Gunneridae</taxon>
        <taxon>Pentapetalae</taxon>
        <taxon>asterids</taxon>
        <taxon>lamiids</taxon>
        <taxon>Solanales</taxon>
        <taxon>Solanaceae</taxon>
        <taxon>Nicotianoideae</taxon>
        <taxon>Nicotianeae</taxon>
        <taxon>Nicotiana</taxon>
    </lineage>
</organism>
<accession>Q70Z19</accession>
<keyword id="KW-0143">Chaperone</keyword>
<keyword id="KW-0175">Coiled coil</keyword>
<keyword id="KW-0963">Cytoplasm</keyword>
<keyword id="KW-0449">Lipoprotein</keyword>
<keyword id="KW-0488">Methylation</keyword>
<keyword id="KW-0539">Nucleus</keyword>
<keyword id="KW-0636">Prenylation</keyword>
<keyword id="KW-1185">Reference proteome</keyword>
<reference key="1">
    <citation type="journal article" date="2003" name="Planta">
        <title>Regulation of biosynthesis and intracellular localization of rice and tobacco homologues of nucleosome assembly protein 1.</title>
        <authorList>
            <person name="Dong A."/>
            <person name="Zhu Y."/>
            <person name="Yu Y."/>
            <person name="Cao K."/>
            <person name="Sun C."/>
            <person name="Shen W.H."/>
        </authorList>
    </citation>
    <scope>NUCLEOTIDE SEQUENCE [MRNA]</scope>
    <scope>FUNCTION</scope>
    <source>
        <strain>cv. Bright Yellow 2</strain>
    </source>
</reference>
<reference key="2">
    <citation type="journal article" date="2005" name="Plant Physiol.">
        <title>Interacting proteins and differences in nuclear transport reveal specific functions for the NAP1 family proteins in plants.</title>
        <authorList>
            <person name="Dong A."/>
            <person name="Liu Z."/>
            <person name="Zhu Y."/>
            <person name="Yu F."/>
            <person name="Li Z."/>
            <person name="Cao K."/>
            <person name="Shen W.H."/>
        </authorList>
    </citation>
    <scope>INTERACTION WITH CYCB1;1</scope>
    <scope>SUBCELLULAR LOCATION</scope>
    <scope>FUNCTION</scope>
</reference>
<gene>
    <name type="primary">NAP1;1</name>
    <name type="synonym">NAP1_L1</name>
</gene>
<evidence type="ECO:0000250" key="1"/>
<evidence type="ECO:0000250" key="2">
    <source>
        <dbReference type="UniProtKB" id="Q9SZI2"/>
    </source>
</evidence>
<evidence type="ECO:0000255" key="3"/>
<evidence type="ECO:0000256" key="4">
    <source>
        <dbReference type="SAM" id="MobiDB-lite"/>
    </source>
</evidence>
<evidence type="ECO:0000269" key="5">
    <source>
    </source>
</evidence>
<evidence type="ECO:0000269" key="6">
    <source>
    </source>
</evidence>
<evidence type="ECO:0000305" key="7"/>
<comment type="function">
    <text evidence="1 5 6">May modulate chromatin structure by regulation of nucleosome assembly/disassembly. Could function together with B-type cyclins in the regulation of microtubule dynamics.</text>
</comment>
<comment type="subunit">
    <text evidence="6">Binds preferentially histones H4 and H1 in vitro. Interacts with CYCB1;1.</text>
</comment>
<comment type="subcellular location">
    <subcellularLocation>
        <location evidence="6">Nucleus</location>
    </subcellularLocation>
    <subcellularLocation>
        <location evidence="6">Cytoplasm</location>
    </subcellularLocation>
    <text>Shuttles between cytoplasm and nucleus.</text>
</comment>
<comment type="domain">
    <text>The acidic domain is probably involved in the interaction with histones.</text>
</comment>
<comment type="similarity">
    <text evidence="7">Belongs to the nucleosome assembly protein (NAP) family.</text>
</comment>